<reference key="1">
    <citation type="submission" date="2002-06" db="EMBL/GenBank/DDBJ databases">
        <title>Evolution of type IV secretion systems in Bartonella: horizontal transmission and gene conversion.</title>
        <authorList>
            <person name="Alsmark U.C.M."/>
            <person name="Frank A.C."/>
            <person name="Thollesson M."/>
            <person name="Andersson S.G.E."/>
        </authorList>
    </citation>
    <scope>NUCLEOTIDE SEQUENCE [GENOMIC DNA]</scope>
    <source>
        <strain>Toulouse</strain>
    </source>
</reference>
<reference key="2">
    <citation type="submission" date="2003-01" db="EMBL/GenBank/DDBJ databases">
        <title>Genes composing the virB operon of Bartonella quintana.</title>
        <authorList>
            <person name="Kohlhorst D.E."/>
            <person name="Soni T."/>
            <person name="Baumstark B.R."/>
        </authorList>
    </citation>
    <scope>NUCLEOTIDE SEQUENCE [GENOMIC DNA]</scope>
    <source>
        <strain>ATCC VR-358 / Fuller / CIP 107027</strain>
    </source>
</reference>
<reference key="3">
    <citation type="journal article" date="2004" name="Proc. Natl. Acad. Sci. U.S.A.">
        <title>The louse-borne human pathogen Bartonella quintana is a genomic derivative of the zoonotic agent Bartonella henselae.</title>
        <authorList>
            <person name="Alsmark U.C.M."/>
            <person name="Frank A.C."/>
            <person name="Karlberg E.O."/>
            <person name="Legault B.-A."/>
            <person name="Ardell D.H."/>
            <person name="Canbaeck B."/>
            <person name="Eriksson A.-S."/>
            <person name="Naeslund A.K."/>
            <person name="Handley S.A."/>
            <person name="Huvet M."/>
            <person name="La Scola B."/>
            <person name="Holmberg M."/>
            <person name="Andersson S.G.E."/>
        </authorList>
    </citation>
    <scope>NUCLEOTIDE SEQUENCE [LARGE SCALE GENOMIC DNA]</scope>
    <scope>POSSIBLE FUNCTION</scope>
    <source>
        <strain>Toulouse</strain>
    </source>
</reference>
<keyword id="KW-0067">ATP-binding</keyword>
<keyword id="KW-0997">Cell inner membrane</keyword>
<keyword id="KW-1003">Cell membrane</keyword>
<keyword id="KW-0472">Membrane</keyword>
<keyword id="KW-0547">Nucleotide-binding</keyword>
<keyword id="KW-0813">Transport</keyword>
<keyword id="KW-0843">Virulence</keyword>
<feature type="chain" id="PRO_0000281413" description="Type IV secretion system protein virB4">
    <location>
        <begin position="1"/>
        <end position="784"/>
    </location>
</feature>
<feature type="binding site" evidence="2">
    <location>
        <begin position="435"/>
        <end position="442"/>
    </location>
    <ligand>
        <name>ATP</name>
        <dbReference type="ChEBI" id="CHEBI:30616"/>
    </ligand>
</feature>
<dbReference type="EMBL" id="AY122055">
    <property type="protein sequence ID" value="AAM82237.1"/>
    <property type="molecule type" value="Genomic_DNA"/>
</dbReference>
<dbReference type="EMBL" id="AY216720">
    <property type="protein sequence ID" value="AAN04487.1"/>
    <property type="status" value="ALT_FRAME"/>
    <property type="molecule type" value="Genomic_DNA"/>
</dbReference>
<dbReference type="EMBL" id="BX897700">
    <property type="protein sequence ID" value="CAF26522.1"/>
    <property type="molecule type" value="Genomic_DNA"/>
</dbReference>
<dbReference type="RefSeq" id="WP_011179726.1">
    <property type="nucleotide sequence ID" value="NC_005955.1"/>
</dbReference>
<dbReference type="SMR" id="Q6FYW7"/>
<dbReference type="KEGG" id="bqu:BQ10550"/>
<dbReference type="eggNOG" id="COG3451">
    <property type="taxonomic scope" value="Bacteria"/>
</dbReference>
<dbReference type="HOGENOM" id="CLU_008341_3_0_5"/>
<dbReference type="OrthoDB" id="9816422at2"/>
<dbReference type="Proteomes" id="UP000000597">
    <property type="component" value="Chromosome"/>
</dbReference>
<dbReference type="GO" id="GO:0005886">
    <property type="term" value="C:plasma membrane"/>
    <property type="evidence" value="ECO:0007669"/>
    <property type="project" value="UniProtKB-SubCell"/>
</dbReference>
<dbReference type="GO" id="GO:0005524">
    <property type="term" value="F:ATP binding"/>
    <property type="evidence" value="ECO:0007669"/>
    <property type="project" value="UniProtKB-KW"/>
</dbReference>
<dbReference type="GO" id="GO:0016887">
    <property type="term" value="F:ATP hydrolysis activity"/>
    <property type="evidence" value="ECO:0007669"/>
    <property type="project" value="InterPro"/>
</dbReference>
<dbReference type="CDD" id="cd01127">
    <property type="entry name" value="TrwB_TraG_TraD_VirD4"/>
    <property type="match status" value="1"/>
</dbReference>
<dbReference type="Gene3D" id="3.40.50.300">
    <property type="entry name" value="P-loop containing nucleotide triphosphate hydrolases"/>
    <property type="match status" value="2"/>
</dbReference>
<dbReference type="InterPro" id="IPR003593">
    <property type="entry name" value="AAA+_ATPase"/>
</dbReference>
<dbReference type="InterPro" id="IPR004346">
    <property type="entry name" value="CagE_TrbE_VirB"/>
</dbReference>
<dbReference type="InterPro" id="IPR018145">
    <property type="entry name" value="CagE_TrbE_VirB_cntrl_dom"/>
</dbReference>
<dbReference type="InterPro" id="IPR027417">
    <property type="entry name" value="P-loop_NTPase"/>
</dbReference>
<dbReference type="InterPro" id="IPR043964">
    <property type="entry name" value="P-loop_TraG"/>
</dbReference>
<dbReference type="InterPro" id="IPR051162">
    <property type="entry name" value="T4SS_component"/>
</dbReference>
<dbReference type="NCBIfam" id="TIGR00929">
    <property type="entry name" value="VirB4_CagE"/>
    <property type="match status" value="1"/>
</dbReference>
<dbReference type="PANTHER" id="PTHR30121:SF12">
    <property type="entry name" value="TYPE IV SECRETION SYSTEM PROTEIN CAGE"/>
    <property type="match status" value="1"/>
</dbReference>
<dbReference type="PANTHER" id="PTHR30121">
    <property type="entry name" value="UNCHARACTERIZED PROTEIN YJGR-RELATED"/>
    <property type="match status" value="1"/>
</dbReference>
<dbReference type="Pfam" id="PF03135">
    <property type="entry name" value="CagE_TrbE_VirB"/>
    <property type="match status" value="1"/>
</dbReference>
<dbReference type="Pfam" id="PF19044">
    <property type="entry name" value="P-loop_TraG"/>
    <property type="match status" value="2"/>
</dbReference>
<dbReference type="SMART" id="SM00382">
    <property type="entry name" value="AAA"/>
    <property type="match status" value="1"/>
</dbReference>
<dbReference type="SUPFAM" id="SSF52540">
    <property type="entry name" value="P-loop containing nucleoside triphosphate hydrolases"/>
    <property type="match status" value="1"/>
</dbReference>
<organism>
    <name type="scientific">Bartonella quintana (strain Toulouse)</name>
    <name type="common">Rochalimaea quintana</name>
    <dbReference type="NCBI Taxonomy" id="283165"/>
    <lineage>
        <taxon>Bacteria</taxon>
        <taxon>Pseudomonadati</taxon>
        <taxon>Pseudomonadota</taxon>
        <taxon>Alphaproteobacteria</taxon>
        <taxon>Hyphomicrobiales</taxon>
        <taxon>Bartonellaceae</taxon>
        <taxon>Bartonella</taxon>
    </lineage>
</organism>
<evidence type="ECO:0000250" key="1"/>
<evidence type="ECO:0000255" key="2"/>
<evidence type="ECO:0000305" key="3"/>
<gene>
    <name type="primary">virB4</name>
    <name type="ordered locus">BQ10550</name>
</gene>
<name>VIRB4_BARQU</name>
<protein>
    <recommendedName>
        <fullName>Type IV secretion system protein virB4</fullName>
    </recommendedName>
</protein>
<sequence length="784" mass="89485">MSIMKRESLPEEYIPYIRHVNQHVIALNSRCLMTVMAVEGVNFDTADINHLNSLHNQLNTLLRNIADERVALYSHIIRRRETIYPESRFFSSFAATLDEKYKKKMVSQELYRNDLFVSLLWNPTSGKTEQLASFFQRLTKAKKTQSEPDMEAIRKIEELSQDLIQGLESYEARLLSVYAHEGILFSEQSEFLHQLVGGRRERIPLTFGTIASTIYSDRVIFGKEMIEIRHESNERFVGMFGWKEYPSKTRPGMTDGLLTAPFEFILTQSFVFKSKAAARVIMGRKQNQMINAADRASSQIDALDEALDDLESNRFVLGEHHLSLAVFADQPKTLVEYLSKARAHLTNGGAVIAREDLGLEAAWWAQLPGNFSYRARSGAITSRNFAALSPFHSFPIGKLEGNVWGAAVALLKTQAGSPYYFNFHYGDLGNTFVCGPSGSGKTVIVNFLLAQLQKHNPTMVFFDKDQGAEIFVRAGGGKYKPLKNGQPTGIAPLKGMEYTEKNKIFLRSWVLKLVTTEGQTVTEQERQDIAKAINSLESLPHAQRSLGALQLFFDNTSKEGIAIRLQRWIKGNDLGWVFDNDQDDLNLDSQFIGYDMTDFLDNEEIRRPLMMYLFNRILDLIDGRRIIIVIDEFWKALEDDSFKAFAQDRLKTIRKQNGMMLFATQSPKDALNSTIAHTIIEQCPTQIFFPNQKANYKDYVEDFKLTEREFELIQSELSRESRRFLIKQGQNSVVAELNLRGMNDEIAILSGTTKNIELVNQIINDYGADPDTWLPIFHQRRENQ</sequence>
<proteinExistence type="inferred from homology"/>
<accession>Q6FYW7</accession>
<accession>Q4L2Q9</accession>
<accession>Q8KRG3</accession>
<comment type="function">
    <text>Component of the type IV secretion system VirB/VirD4 which could be a major virulence determinant for subversion of human endothelial cell (HEC) function. Altogether with virB11, may be implicated in providing the energy, via hydrolysis of ATP, for the assembly of secretion system and substrate transport.</text>
</comment>
<comment type="subunit">
    <text evidence="1">Interacts with virB10.</text>
</comment>
<comment type="subcellular location">
    <subcellularLocation>
        <location evidence="3">Cell inner membrane</location>
    </subcellularLocation>
</comment>
<comment type="similarity">
    <text evidence="3">Belongs to the TrbE/VirB4 family.</text>
</comment>
<comment type="sequence caution" evidence="3">
    <conflict type="frameshift">
        <sequence resource="EMBL-CDS" id="AAN04487"/>
    </conflict>
</comment>